<feature type="chain" id="PRO_0000207254" description="Leucyl/phenylalanyl-tRNA--protein transferase">
    <location>
        <begin position="1"/>
        <end position="236"/>
    </location>
</feature>
<organism>
    <name type="scientific">Yersinia pestis</name>
    <dbReference type="NCBI Taxonomy" id="632"/>
    <lineage>
        <taxon>Bacteria</taxon>
        <taxon>Pseudomonadati</taxon>
        <taxon>Pseudomonadota</taxon>
        <taxon>Gammaproteobacteria</taxon>
        <taxon>Enterobacterales</taxon>
        <taxon>Yersiniaceae</taxon>
        <taxon>Yersinia</taxon>
    </lineage>
</organism>
<comment type="function">
    <text evidence="1">Functions in the N-end rule pathway of protein degradation where it conjugates Leu, Phe and, less efficiently, Met from aminoacyl-tRNAs to the N-termini of proteins containing an N-terminal arginine or lysine.</text>
</comment>
<comment type="catalytic activity">
    <reaction evidence="1">
        <text>N-terminal L-lysyl-[protein] + L-leucyl-tRNA(Leu) = N-terminal L-leucyl-L-lysyl-[protein] + tRNA(Leu) + H(+)</text>
        <dbReference type="Rhea" id="RHEA:12340"/>
        <dbReference type="Rhea" id="RHEA-COMP:9613"/>
        <dbReference type="Rhea" id="RHEA-COMP:9622"/>
        <dbReference type="Rhea" id="RHEA-COMP:12670"/>
        <dbReference type="Rhea" id="RHEA-COMP:12671"/>
        <dbReference type="ChEBI" id="CHEBI:15378"/>
        <dbReference type="ChEBI" id="CHEBI:65249"/>
        <dbReference type="ChEBI" id="CHEBI:78442"/>
        <dbReference type="ChEBI" id="CHEBI:78494"/>
        <dbReference type="ChEBI" id="CHEBI:133043"/>
        <dbReference type="EC" id="2.3.2.6"/>
    </reaction>
</comment>
<comment type="catalytic activity">
    <reaction evidence="1">
        <text>N-terminal L-arginyl-[protein] + L-leucyl-tRNA(Leu) = N-terminal L-leucyl-L-arginyl-[protein] + tRNA(Leu) + H(+)</text>
        <dbReference type="Rhea" id="RHEA:50416"/>
        <dbReference type="Rhea" id="RHEA-COMP:9613"/>
        <dbReference type="Rhea" id="RHEA-COMP:9622"/>
        <dbReference type="Rhea" id="RHEA-COMP:12672"/>
        <dbReference type="Rhea" id="RHEA-COMP:12673"/>
        <dbReference type="ChEBI" id="CHEBI:15378"/>
        <dbReference type="ChEBI" id="CHEBI:64719"/>
        <dbReference type="ChEBI" id="CHEBI:78442"/>
        <dbReference type="ChEBI" id="CHEBI:78494"/>
        <dbReference type="ChEBI" id="CHEBI:133044"/>
        <dbReference type="EC" id="2.3.2.6"/>
    </reaction>
</comment>
<comment type="catalytic activity">
    <reaction evidence="1">
        <text>L-phenylalanyl-tRNA(Phe) + an N-terminal L-alpha-aminoacyl-[protein] = an N-terminal L-phenylalanyl-L-alpha-aminoacyl-[protein] + tRNA(Phe)</text>
        <dbReference type="Rhea" id="RHEA:43632"/>
        <dbReference type="Rhea" id="RHEA-COMP:9668"/>
        <dbReference type="Rhea" id="RHEA-COMP:9699"/>
        <dbReference type="Rhea" id="RHEA-COMP:10636"/>
        <dbReference type="Rhea" id="RHEA-COMP:10637"/>
        <dbReference type="ChEBI" id="CHEBI:78442"/>
        <dbReference type="ChEBI" id="CHEBI:78531"/>
        <dbReference type="ChEBI" id="CHEBI:78597"/>
        <dbReference type="ChEBI" id="CHEBI:83561"/>
        <dbReference type="EC" id="2.3.2.6"/>
    </reaction>
</comment>
<comment type="subcellular location">
    <subcellularLocation>
        <location evidence="1">Cytoplasm</location>
    </subcellularLocation>
</comment>
<comment type="similarity">
    <text evidence="1">Belongs to the L/F-transferase family.</text>
</comment>
<comment type="sequence caution" evidence="2">
    <conflict type="erroneous initiation">
        <sequence resource="EMBL-CDS" id="AAM86357"/>
    </conflict>
</comment>
<comment type="sequence caution" evidence="2">
    <conflict type="erroneous initiation">
        <sequence resource="EMBL-CDS" id="AAS61465"/>
    </conflict>
</comment>
<protein>
    <recommendedName>
        <fullName evidence="1">Leucyl/phenylalanyl-tRNA--protein transferase</fullName>
        <ecNumber evidence="1">2.3.2.6</ecNumber>
    </recommendedName>
    <alternativeName>
        <fullName evidence="1">L/F-transferase</fullName>
    </alternativeName>
    <alternativeName>
        <fullName evidence="1">Leucyltransferase</fullName>
    </alternativeName>
    <alternativeName>
        <fullName evidence="1">Phenyalanyltransferase</fullName>
    </alternativeName>
</protein>
<gene>
    <name evidence="1" type="primary">aat</name>
    <name type="ordered locus">YPO1371</name>
    <name type="ordered locus">y2806</name>
    <name type="ordered locus">YP_1222</name>
</gene>
<accession>Q8ZGD2</accession>
<accession>Q0WH44</accession>
<accession>Q8D042</accession>
<evidence type="ECO:0000255" key="1">
    <source>
        <dbReference type="HAMAP-Rule" id="MF_00688"/>
    </source>
</evidence>
<evidence type="ECO:0000305" key="2"/>
<proteinExistence type="inferred from homology"/>
<name>LFTR_YERPE</name>
<reference key="1">
    <citation type="journal article" date="2001" name="Nature">
        <title>Genome sequence of Yersinia pestis, the causative agent of plague.</title>
        <authorList>
            <person name="Parkhill J."/>
            <person name="Wren B.W."/>
            <person name="Thomson N.R."/>
            <person name="Titball R.W."/>
            <person name="Holden M.T.G."/>
            <person name="Prentice M.B."/>
            <person name="Sebaihia M."/>
            <person name="James K.D."/>
            <person name="Churcher C.M."/>
            <person name="Mungall K.L."/>
            <person name="Baker S."/>
            <person name="Basham D."/>
            <person name="Bentley S.D."/>
            <person name="Brooks K."/>
            <person name="Cerdeno-Tarraga A.-M."/>
            <person name="Chillingworth T."/>
            <person name="Cronin A."/>
            <person name="Davies R.M."/>
            <person name="Davis P."/>
            <person name="Dougan G."/>
            <person name="Feltwell T."/>
            <person name="Hamlin N."/>
            <person name="Holroyd S."/>
            <person name="Jagels K."/>
            <person name="Karlyshev A.V."/>
            <person name="Leather S."/>
            <person name="Moule S."/>
            <person name="Oyston P.C.F."/>
            <person name="Quail M.A."/>
            <person name="Rutherford K.M."/>
            <person name="Simmonds M."/>
            <person name="Skelton J."/>
            <person name="Stevens K."/>
            <person name="Whitehead S."/>
            <person name="Barrell B.G."/>
        </authorList>
    </citation>
    <scope>NUCLEOTIDE SEQUENCE [LARGE SCALE GENOMIC DNA]</scope>
    <source>
        <strain>CO-92 / Biovar Orientalis</strain>
    </source>
</reference>
<reference key="2">
    <citation type="journal article" date="2002" name="J. Bacteriol.">
        <title>Genome sequence of Yersinia pestis KIM.</title>
        <authorList>
            <person name="Deng W."/>
            <person name="Burland V."/>
            <person name="Plunkett G. III"/>
            <person name="Boutin A."/>
            <person name="Mayhew G.F."/>
            <person name="Liss P."/>
            <person name="Perna N.T."/>
            <person name="Rose D.J."/>
            <person name="Mau B."/>
            <person name="Zhou S."/>
            <person name="Schwartz D.C."/>
            <person name="Fetherston J.D."/>
            <person name="Lindler L.E."/>
            <person name="Brubaker R.R."/>
            <person name="Plano G.V."/>
            <person name="Straley S.C."/>
            <person name="McDonough K.A."/>
            <person name="Nilles M.L."/>
            <person name="Matson J.S."/>
            <person name="Blattner F.R."/>
            <person name="Perry R.D."/>
        </authorList>
    </citation>
    <scope>NUCLEOTIDE SEQUENCE [LARGE SCALE GENOMIC DNA]</scope>
    <source>
        <strain>KIM10+ / Biovar Mediaevalis</strain>
    </source>
</reference>
<reference key="3">
    <citation type="journal article" date="2004" name="DNA Res.">
        <title>Complete genome sequence of Yersinia pestis strain 91001, an isolate avirulent to humans.</title>
        <authorList>
            <person name="Song Y."/>
            <person name="Tong Z."/>
            <person name="Wang J."/>
            <person name="Wang L."/>
            <person name="Guo Z."/>
            <person name="Han Y."/>
            <person name="Zhang J."/>
            <person name="Pei D."/>
            <person name="Zhou D."/>
            <person name="Qin H."/>
            <person name="Pang X."/>
            <person name="Han Y."/>
            <person name="Zhai J."/>
            <person name="Li M."/>
            <person name="Cui B."/>
            <person name="Qi Z."/>
            <person name="Jin L."/>
            <person name="Dai R."/>
            <person name="Chen F."/>
            <person name="Li S."/>
            <person name="Ye C."/>
            <person name="Du Z."/>
            <person name="Lin W."/>
            <person name="Wang J."/>
            <person name="Yu J."/>
            <person name="Yang H."/>
            <person name="Wang J."/>
            <person name="Huang P."/>
            <person name="Yang R."/>
        </authorList>
    </citation>
    <scope>NUCLEOTIDE SEQUENCE [LARGE SCALE GENOMIC DNA]</scope>
    <source>
        <strain>91001 / Biovar Mediaevalis</strain>
    </source>
</reference>
<dbReference type="EC" id="2.3.2.6" evidence="1"/>
<dbReference type="EMBL" id="AL590842">
    <property type="protein sequence ID" value="CAL20023.1"/>
    <property type="molecule type" value="Genomic_DNA"/>
</dbReference>
<dbReference type="EMBL" id="AE009952">
    <property type="protein sequence ID" value="AAM86357.1"/>
    <property type="status" value="ALT_INIT"/>
    <property type="molecule type" value="Genomic_DNA"/>
</dbReference>
<dbReference type="EMBL" id="AE017042">
    <property type="protein sequence ID" value="AAS61465.1"/>
    <property type="status" value="ALT_INIT"/>
    <property type="molecule type" value="Genomic_DNA"/>
</dbReference>
<dbReference type="PIR" id="AE0167">
    <property type="entry name" value="AE0167"/>
</dbReference>
<dbReference type="RefSeq" id="WP_002211346.1">
    <property type="nucleotide sequence ID" value="NZ_WUCM01000096.1"/>
</dbReference>
<dbReference type="RefSeq" id="YP_002346394.1">
    <property type="nucleotide sequence ID" value="NC_003143.1"/>
</dbReference>
<dbReference type="SMR" id="Q8ZGD2"/>
<dbReference type="STRING" id="214092.YPO1371"/>
<dbReference type="PaxDb" id="214092-YPO1371"/>
<dbReference type="DNASU" id="1147753"/>
<dbReference type="EnsemblBacteria" id="AAS61465">
    <property type="protein sequence ID" value="AAS61465"/>
    <property type="gene ID" value="YP_1222"/>
</dbReference>
<dbReference type="GeneID" id="57977167"/>
<dbReference type="KEGG" id="ype:YPO1371"/>
<dbReference type="KEGG" id="ypk:y2806"/>
<dbReference type="KEGG" id="ypm:YP_1222"/>
<dbReference type="PATRIC" id="fig|214092.21.peg.1692"/>
<dbReference type="eggNOG" id="COG2360">
    <property type="taxonomic scope" value="Bacteria"/>
</dbReference>
<dbReference type="HOGENOM" id="CLU_075045_0_0_6"/>
<dbReference type="OMA" id="YRQGIFP"/>
<dbReference type="OrthoDB" id="9790282at2"/>
<dbReference type="Proteomes" id="UP000000815">
    <property type="component" value="Chromosome"/>
</dbReference>
<dbReference type="Proteomes" id="UP000001019">
    <property type="component" value="Chromosome"/>
</dbReference>
<dbReference type="Proteomes" id="UP000002490">
    <property type="component" value="Chromosome"/>
</dbReference>
<dbReference type="GO" id="GO:0005737">
    <property type="term" value="C:cytoplasm"/>
    <property type="evidence" value="ECO:0000318"/>
    <property type="project" value="GO_Central"/>
</dbReference>
<dbReference type="GO" id="GO:0008914">
    <property type="term" value="F:leucyl-tRNA--protein transferase activity"/>
    <property type="evidence" value="ECO:0000318"/>
    <property type="project" value="GO_Central"/>
</dbReference>
<dbReference type="GO" id="GO:0030163">
    <property type="term" value="P:protein catabolic process"/>
    <property type="evidence" value="ECO:0007669"/>
    <property type="project" value="UniProtKB-UniRule"/>
</dbReference>
<dbReference type="FunFam" id="3.30.70.3550:FF:000001">
    <property type="entry name" value="Leucyl/phenylalanyl-tRNA--protein transferase"/>
    <property type="match status" value="1"/>
</dbReference>
<dbReference type="FunFam" id="3.40.630.70:FF:000001">
    <property type="entry name" value="Leucyl/phenylalanyl-tRNA--protein transferase"/>
    <property type="match status" value="1"/>
</dbReference>
<dbReference type="Gene3D" id="3.40.630.70">
    <property type="entry name" value="Leucyl/phenylalanyl-tRNA-protein transferase, C-terminal domain"/>
    <property type="match status" value="1"/>
</dbReference>
<dbReference type="Gene3D" id="3.30.70.3550">
    <property type="entry name" value="Leucyl/phenylalanyl-tRNA-protein transferase, N-terminal domain"/>
    <property type="match status" value="1"/>
</dbReference>
<dbReference type="HAMAP" id="MF_00688">
    <property type="entry name" value="Leu_Phe_trans"/>
    <property type="match status" value="1"/>
</dbReference>
<dbReference type="InterPro" id="IPR016181">
    <property type="entry name" value="Acyl_CoA_acyltransferase"/>
</dbReference>
<dbReference type="InterPro" id="IPR004616">
    <property type="entry name" value="Leu/Phe-tRNA_Trfase"/>
</dbReference>
<dbReference type="InterPro" id="IPR042203">
    <property type="entry name" value="Leu/Phe-tRNA_Trfase_C"/>
</dbReference>
<dbReference type="InterPro" id="IPR042221">
    <property type="entry name" value="Leu/Phe-tRNA_Trfase_N"/>
</dbReference>
<dbReference type="NCBIfam" id="TIGR00667">
    <property type="entry name" value="aat"/>
    <property type="match status" value="1"/>
</dbReference>
<dbReference type="PANTHER" id="PTHR30098">
    <property type="entry name" value="LEUCYL/PHENYLALANYL-TRNA--PROTEIN TRANSFERASE"/>
    <property type="match status" value="1"/>
</dbReference>
<dbReference type="PANTHER" id="PTHR30098:SF2">
    <property type="entry name" value="LEUCYL_PHENYLALANYL-TRNA--PROTEIN TRANSFERASE"/>
    <property type="match status" value="1"/>
</dbReference>
<dbReference type="Pfam" id="PF03588">
    <property type="entry name" value="Leu_Phe_trans"/>
    <property type="match status" value="1"/>
</dbReference>
<dbReference type="SUPFAM" id="SSF55729">
    <property type="entry name" value="Acyl-CoA N-acyltransferases (Nat)"/>
    <property type="match status" value="1"/>
</dbReference>
<keyword id="KW-0012">Acyltransferase</keyword>
<keyword id="KW-0963">Cytoplasm</keyword>
<keyword id="KW-1185">Reference proteome</keyword>
<keyword id="KW-0808">Transferase</keyword>
<sequence length="236" mass="26403">MRVTQLSSQSFIFPSPELALREPNGLLALGGDLTAPRLLAAYQRGIFPWFNPGEMILWWSPDPRAVLFPEDLHISRSMRRFIRHCPYRFTLNHAFADVISACATERDEGTWIGRDVQQAYCQLHALGHAHSLEVWLENELVGGLYGVAVGAVFCGESMFSRADNASKSALMVFCHHFTQHGGELIDCQVLNAHTASLGAVEIPRNFFLQQLSQLQFSPLPAECWLPQSLNFSSAMQ</sequence>